<organism>
    <name type="scientific">Rattus norvegicus</name>
    <name type="common">Rat</name>
    <dbReference type="NCBI Taxonomy" id="10116"/>
    <lineage>
        <taxon>Eukaryota</taxon>
        <taxon>Metazoa</taxon>
        <taxon>Chordata</taxon>
        <taxon>Craniata</taxon>
        <taxon>Vertebrata</taxon>
        <taxon>Euteleostomi</taxon>
        <taxon>Mammalia</taxon>
        <taxon>Eutheria</taxon>
        <taxon>Euarchontoglires</taxon>
        <taxon>Glires</taxon>
        <taxon>Rodentia</taxon>
        <taxon>Myomorpha</taxon>
        <taxon>Muroidea</taxon>
        <taxon>Muridae</taxon>
        <taxon>Murinae</taxon>
        <taxon>Rattus</taxon>
    </lineage>
</organism>
<protein>
    <recommendedName>
        <fullName>DNA-binding protein SMUBP-2</fullName>
        <ecNumber evidence="2">3.6.4.12</ecNumber>
        <ecNumber evidence="2">3.6.4.13</ecNumber>
    </recommendedName>
    <alternativeName>
        <fullName>ATP-dependent helicase IGHMBP2</fullName>
    </alternativeName>
    <alternativeName>
        <fullName>Antifreeze enhancer-binding protein ortholog</fullName>
        <shortName>AEP</shortName>
    </alternativeName>
</protein>
<proteinExistence type="evidence at protein level"/>
<dbReference type="EC" id="3.6.4.12" evidence="2"/>
<dbReference type="EC" id="3.6.4.13" evidence="2"/>
<dbReference type="EMBL" id="AF199411">
    <property type="protein sequence ID" value="AAG28561.1"/>
    <property type="molecule type" value="mRNA"/>
</dbReference>
<dbReference type="RefSeq" id="NP_113774.1">
    <property type="nucleotide sequence ID" value="NM_031586.1"/>
</dbReference>
<dbReference type="SMR" id="Q9EQN5"/>
<dbReference type="FunCoup" id="Q9EQN5">
    <property type="interactions" value="1605"/>
</dbReference>
<dbReference type="STRING" id="10116.ENSRNOP00000018487"/>
<dbReference type="GlyGen" id="Q9EQN5">
    <property type="glycosylation" value="1 site"/>
</dbReference>
<dbReference type="PhosphoSitePlus" id="Q9EQN5"/>
<dbReference type="PaxDb" id="10116-ENSRNOP00000018487"/>
<dbReference type="GeneID" id="29532"/>
<dbReference type="KEGG" id="rno:29532"/>
<dbReference type="UCSC" id="RGD:68325">
    <property type="organism name" value="rat"/>
</dbReference>
<dbReference type="AGR" id="RGD:68325"/>
<dbReference type="CTD" id="3508"/>
<dbReference type="RGD" id="68325">
    <property type="gene designation" value="Ighmbp2"/>
</dbReference>
<dbReference type="eggNOG" id="KOG1803">
    <property type="taxonomic scope" value="Eukaryota"/>
</dbReference>
<dbReference type="InParanoid" id="Q9EQN5"/>
<dbReference type="PhylomeDB" id="Q9EQN5"/>
<dbReference type="PRO" id="PR:Q9EQN5"/>
<dbReference type="Proteomes" id="UP000002494">
    <property type="component" value="Unplaced"/>
</dbReference>
<dbReference type="GO" id="GO:0030424">
    <property type="term" value="C:axon"/>
    <property type="evidence" value="ECO:0000266"/>
    <property type="project" value="RGD"/>
</dbReference>
<dbReference type="GO" id="GO:0005737">
    <property type="term" value="C:cytoplasm"/>
    <property type="evidence" value="ECO:0000250"/>
    <property type="project" value="UniProtKB"/>
</dbReference>
<dbReference type="GO" id="GO:0030426">
    <property type="term" value="C:growth cone"/>
    <property type="evidence" value="ECO:0000266"/>
    <property type="project" value="RGD"/>
</dbReference>
<dbReference type="GO" id="GO:0043025">
    <property type="term" value="C:neuronal cell body"/>
    <property type="evidence" value="ECO:0000266"/>
    <property type="project" value="RGD"/>
</dbReference>
<dbReference type="GO" id="GO:0005634">
    <property type="term" value="C:nucleus"/>
    <property type="evidence" value="ECO:0000250"/>
    <property type="project" value="UniProtKB"/>
</dbReference>
<dbReference type="GO" id="GO:0048471">
    <property type="term" value="C:perinuclear region of cytoplasm"/>
    <property type="evidence" value="ECO:0000266"/>
    <property type="project" value="RGD"/>
</dbReference>
<dbReference type="GO" id="GO:1990904">
    <property type="term" value="C:ribonucleoprotein complex"/>
    <property type="evidence" value="ECO:0000266"/>
    <property type="project" value="RGD"/>
</dbReference>
<dbReference type="GO" id="GO:0043139">
    <property type="term" value="F:5'-3' DNA helicase activity"/>
    <property type="evidence" value="ECO:0000250"/>
    <property type="project" value="UniProtKB"/>
</dbReference>
<dbReference type="GO" id="GO:0032574">
    <property type="term" value="F:5'-3' RNA helicase activity"/>
    <property type="evidence" value="ECO:0000250"/>
    <property type="project" value="UniProtKB"/>
</dbReference>
<dbReference type="GO" id="GO:0005524">
    <property type="term" value="F:ATP binding"/>
    <property type="evidence" value="ECO:0000250"/>
    <property type="project" value="UniProtKB"/>
</dbReference>
<dbReference type="GO" id="GO:0016887">
    <property type="term" value="F:ATP hydrolysis activity"/>
    <property type="evidence" value="ECO:0000250"/>
    <property type="project" value="UniProtKB"/>
</dbReference>
<dbReference type="GO" id="GO:0008094">
    <property type="term" value="F:ATP-dependent activity, acting on DNA"/>
    <property type="evidence" value="ECO:0000250"/>
    <property type="project" value="UniProtKB"/>
</dbReference>
<dbReference type="GO" id="GO:0008186">
    <property type="term" value="F:ATP-dependent activity, acting on RNA"/>
    <property type="evidence" value="ECO:0000250"/>
    <property type="project" value="UniProtKB"/>
</dbReference>
<dbReference type="GO" id="GO:0003677">
    <property type="term" value="F:DNA binding"/>
    <property type="evidence" value="ECO:0000314"/>
    <property type="project" value="RGD"/>
</dbReference>
<dbReference type="GO" id="GO:0036121">
    <property type="term" value="F:double-stranded DNA helicase activity"/>
    <property type="evidence" value="ECO:0000250"/>
    <property type="project" value="UniProtKB"/>
</dbReference>
<dbReference type="GO" id="GO:1990955">
    <property type="term" value="F:G-rich single-stranded DNA binding"/>
    <property type="evidence" value="ECO:0000266"/>
    <property type="project" value="RGD"/>
</dbReference>
<dbReference type="GO" id="GO:0140296">
    <property type="term" value="F:general transcription initiation factor binding"/>
    <property type="evidence" value="ECO:0000266"/>
    <property type="project" value="RGD"/>
</dbReference>
<dbReference type="GO" id="GO:0042802">
    <property type="term" value="F:identical protein binding"/>
    <property type="evidence" value="ECO:0000266"/>
    <property type="project" value="RGD"/>
</dbReference>
<dbReference type="GO" id="GO:0043022">
    <property type="term" value="F:ribosome binding"/>
    <property type="evidence" value="ECO:0000250"/>
    <property type="project" value="UniProtKB"/>
</dbReference>
<dbReference type="GO" id="GO:0003723">
    <property type="term" value="F:RNA binding"/>
    <property type="evidence" value="ECO:0000250"/>
    <property type="project" value="UniProtKB"/>
</dbReference>
<dbReference type="GO" id="GO:0003697">
    <property type="term" value="F:single-stranded DNA binding"/>
    <property type="evidence" value="ECO:0000250"/>
    <property type="project" value="UniProtKB"/>
</dbReference>
<dbReference type="GO" id="GO:0003727">
    <property type="term" value="F:single-stranded RNA binding"/>
    <property type="evidence" value="ECO:0000250"/>
    <property type="project" value="UniProtKB"/>
</dbReference>
<dbReference type="GO" id="GO:0000049">
    <property type="term" value="F:tRNA binding"/>
    <property type="evidence" value="ECO:0000250"/>
    <property type="project" value="UniProtKB"/>
</dbReference>
<dbReference type="GO" id="GO:0008270">
    <property type="term" value="F:zinc ion binding"/>
    <property type="evidence" value="ECO:0007669"/>
    <property type="project" value="UniProtKB-KW"/>
</dbReference>
<dbReference type="GO" id="GO:0000122">
    <property type="term" value="P:negative regulation of transcription by RNA polymerase II"/>
    <property type="evidence" value="ECO:0000314"/>
    <property type="project" value="RGD"/>
</dbReference>
<dbReference type="GO" id="GO:0050905">
    <property type="term" value="P:neuromuscular process"/>
    <property type="evidence" value="ECO:0000266"/>
    <property type="project" value="RGD"/>
</dbReference>
<dbReference type="GO" id="GO:0021522">
    <property type="term" value="P:spinal cord motor neuron differentiation"/>
    <property type="evidence" value="ECO:0000266"/>
    <property type="project" value="RGD"/>
</dbReference>
<dbReference type="CDD" id="cd18044">
    <property type="entry name" value="DEXXQc_SMUBP2"/>
    <property type="match status" value="1"/>
</dbReference>
<dbReference type="CDD" id="cd02641">
    <property type="entry name" value="R3H_Smubp-2_like"/>
    <property type="match status" value="1"/>
</dbReference>
<dbReference type="CDD" id="cd18808">
    <property type="entry name" value="SF1_C_Upf1"/>
    <property type="match status" value="1"/>
</dbReference>
<dbReference type="FunFam" id="3.40.50.300:FF:001171">
    <property type="entry name" value="DNA-binding protein SMUBP-2"/>
    <property type="match status" value="1"/>
</dbReference>
<dbReference type="FunFam" id="3.40.50.300:FF:001146">
    <property type="entry name" value="DNA-binding protein SMUBP-2 isoform X1"/>
    <property type="match status" value="1"/>
</dbReference>
<dbReference type="FunFam" id="2.40.30.270:FF:000001">
    <property type="entry name" value="Immunoglobulin mu DNA-binding protein 2"/>
    <property type="match status" value="1"/>
</dbReference>
<dbReference type="FunFam" id="3.30.1370.50:FF:000002">
    <property type="entry name" value="Immunoglobulin mu DNA-binding protein 2"/>
    <property type="match status" value="1"/>
</dbReference>
<dbReference type="FunFam" id="4.10.1110.10:FF:000002">
    <property type="entry name" value="Immunoglobulin mu DNA-binding protein 2"/>
    <property type="match status" value="1"/>
</dbReference>
<dbReference type="Gene3D" id="2.40.30.270">
    <property type="match status" value="1"/>
</dbReference>
<dbReference type="Gene3D" id="4.10.1110.10">
    <property type="entry name" value="AN1-like Zinc finger"/>
    <property type="match status" value="1"/>
</dbReference>
<dbReference type="Gene3D" id="3.40.50.300">
    <property type="entry name" value="P-loop containing nucleotide triphosphate hydrolases"/>
    <property type="match status" value="2"/>
</dbReference>
<dbReference type="Gene3D" id="3.30.1370.50">
    <property type="entry name" value="R3H-like domain"/>
    <property type="match status" value="1"/>
</dbReference>
<dbReference type="InterPro" id="IPR003593">
    <property type="entry name" value="AAA+_ATPase"/>
</dbReference>
<dbReference type="InterPro" id="IPR035896">
    <property type="entry name" value="AN1-like_Znf"/>
</dbReference>
<dbReference type="InterPro" id="IPR050534">
    <property type="entry name" value="Coronavir_polyprotein_1ab"/>
</dbReference>
<dbReference type="InterPro" id="IPR041679">
    <property type="entry name" value="DNA2/NAM7-like_C"/>
</dbReference>
<dbReference type="InterPro" id="IPR041677">
    <property type="entry name" value="DNA2/NAM7_AAA_11"/>
</dbReference>
<dbReference type="InterPro" id="IPR014001">
    <property type="entry name" value="Helicase_ATP-bd"/>
</dbReference>
<dbReference type="InterPro" id="IPR027417">
    <property type="entry name" value="P-loop_NTPase"/>
</dbReference>
<dbReference type="InterPro" id="IPR001374">
    <property type="entry name" value="R3H_dom"/>
</dbReference>
<dbReference type="InterPro" id="IPR036867">
    <property type="entry name" value="R3H_dom_sf"/>
</dbReference>
<dbReference type="InterPro" id="IPR034072">
    <property type="entry name" value="R3H_Smubp-2"/>
</dbReference>
<dbReference type="InterPro" id="IPR047187">
    <property type="entry name" value="SF1_C_Upf1"/>
</dbReference>
<dbReference type="InterPro" id="IPR004483">
    <property type="entry name" value="SMUBP-2/Hcs1-like"/>
</dbReference>
<dbReference type="InterPro" id="IPR048761">
    <property type="entry name" value="SMUBP-2_HCS1_1B"/>
</dbReference>
<dbReference type="InterPro" id="IPR000058">
    <property type="entry name" value="Znf_AN1"/>
</dbReference>
<dbReference type="NCBIfam" id="TIGR00376">
    <property type="entry name" value="IGHMBP2 family helicase"/>
    <property type="match status" value="1"/>
</dbReference>
<dbReference type="PANTHER" id="PTHR43788:SF8">
    <property type="entry name" value="DNA-BINDING PROTEIN SMUBP-2"/>
    <property type="match status" value="1"/>
</dbReference>
<dbReference type="PANTHER" id="PTHR43788">
    <property type="entry name" value="DNA2/NAM7 HELICASE FAMILY MEMBER"/>
    <property type="match status" value="1"/>
</dbReference>
<dbReference type="Pfam" id="PF13086">
    <property type="entry name" value="AAA_11"/>
    <property type="match status" value="1"/>
</dbReference>
<dbReference type="Pfam" id="PF13087">
    <property type="entry name" value="AAA_12"/>
    <property type="match status" value="1"/>
</dbReference>
<dbReference type="Pfam" id="PF01424">
    <property type="entry name" value="R3H"/>
    <property type="match status" value="1"/>
</dbReference>
<dbReference type="Pfam" id="PF21138">
    <property type="entry name" value="SMUBP-2_HCS1_1B"/>
    <property type="match status" value="1"/>
</dbReference>
<dbReference type="Pfam" id="PF01428">
    <property type="entry name" value="zf-AN1"/>
    <property type="match status" value="1"/>
</dbReference>
<dbReference type="SMART" id="SM00382">
    <property type="entry name" value="AAA"/>
    <property type="match status" value="1"/>
</dbReference>
<dbReference type="SMART" id="SM00487">
    <property type="entry name" value="DEXDc"/>
    <property type="match status" value="1"/>
</dbReference>
<dbReference type="SMART" id="SM00393">
    <property type="entry name" value="R3H"/>
    <property type="match status" value="1"/>
</dbReference>
<dbReference type="SMART" id="SM00154">
    <property type="entry name" value="ZnF_AN1"/>
    <property type="match status" value="1"/>
</dbReference>
<dbReference type="SUPFAM" id="SSF118310">
    <property type="entry name" value="AN1-like Zinc finger"/>
    <property type="match status" value="1"/>
</dbReference>
<dbReference type="SUPFAM" id="SSF52540">
    <property type="entry name" value="P-loop containing nucleoside triphosphate hydrolases"/>
    <property type="match status" value="1"/>
</dbReference>
<dbReference type="SUPFAM" id="SSF82708">
    <property type="entry name" value="R3H domain"/>
    <property type="match status" value="1"/>
</dbReference>
<dbReference type="PROSITE" id="PS51061">
    <property type="entry name" value="R3H"/>
    <property type="match status" value="1"/>
</dbReference>
<dbReference type="PROSITE" id="PS51039">
    <property type="entry name" value="ZF_AN1"/>
    <property type="match status" value="1"/>
</dbReference>
<accession>Q9EQN5</accession>
<sequence>MASYTVESFVAQQLQLLELERDAEVEERRSWQEHSSLKELQSRGVCLLKLQVSGQRTGLYGQRLVTFEPRKFGPAVVLPSNSFTSGDIVGLYDTNESSQLATGVLTRITQKSVIVAFDESHDFQLNLDRENTYRLLKLANDVTYKRLKKALLTLKKYHSGPASSLIDVLLGGSTPSPATEIPPLTFYNTTLDPSQKEAVSFALAQKEVAIIHGPPGTGKTTTVVEIILQAVKQGLKVLCCAPSNIAVDNLVERLALCKKQILRLGHPARLLESVQQHSLDAVLARSDNAQIVADIRRDIDQVFGKNKKTQDKREKSNFRNEIKLLRKELKEREEAAIVQSLSAADVVLATNTGASTDGPLKLLPEDYFDVVVVDECAQALEASCWIPLLKAPKCILAGDHKQLPPTTVSHKAALAGLSRSLMERLAEKHGAAVVRMLAVQYRMHQAITRWASEAMYHGQLTAHPSVAGHLLKDLPGVADTEETSVPLLLIDTAGCGLLELEEEDSQSKGNPGEVRLVTLHIQALVDAGVQAGDIAVIAPYNLQVDLLRQSLSNKHPELEIKSVDGFQGREKEAVILTFVRSNRKGEVGFLAEDRRINVAVTRARRHVAVICDSHTVNNHAFLKTLVDYFTEHGEVRTAFEYLDDIVPENYTHEGSRSHSCAPKPKCPTTSVRKPASAQESRQEARAATGHSRRKPSEKPLGSQVQPQHSSKANGSDRTGGTDRTEHFRAMIEEFVASKEAQLEFPTSLSSHDRLRVHQLAEEFGLKHDSTGEGKARHITVSRRSPAGSGSATPQPPSPPSPAQAEPEPQVEQPVGQPHGSTQLDLKALHLERLQRQQGCQAQSQLGGGSRPQKAPQKKKKKEPKGPAMALPSEEDFDALVSAVVKADNTCSFTKCSASTTTLGQFCMHCSRRYCLSHHLPEIHGCGEKARAHARQRISREGVLYAGSGTKDRALDPAKRAQLQRKLDKKLGELSSQRTSKKKEKERGT</sequence>
<comment type="function">
    <text evidence="2 10">5' to 3' helicase that unwinds RNA and DNA duplexes in an ATP-dependent reaction (By similarity). Specific to 5'-phosphorylated single-stranded guanine-rich sequences (By similarity). May play a role in RNA metabolism, ribosome biogenesis or initiation of translation (By similarity). May play a role in regulation of transcription (PubMed:11106437). Interacts with tRNA-Tyr (By similarity).</text>
</comment>
<comment type="catalytic activity">
    <reaction evidence="2">
        <text>ATP + H2O = ADP + phosphate + H(+)</text>
        <dbReference type="Rhea" id="RHEA:13065"/>
        <dbReference type="ChEBI" id="CHEBI:15377"/>
        <dbReference type="ChEBI" id="CHEBI:15378"/>
        <dbReference type="ChEBI" id="CHEBI:30616"/>
        <dbReference type="ChEBI" id="CHEBI:43474"/>
        <dbReference type="ChEBI" id="CHEBI:456216"/>
        <dbReference type="EC" id="3.6.4.12"/>
    </reaction>
    <physiologicalReaction direction="left-to-right" evidence="2">
        <dbReference type="Rhea" id="RHEA:13066"/>
    </physiologicalReaction>
</comment>
<comment type="catalytic activity">
    <reaction evidence="2">
        <text>ATP + H2O = ADP + phosphate + H(+)</text>
        <dbReference type="Rhea" id="RHEA:13065"/>
        <dbReference type="ChEBI" id="CHEBI:15377"/>
        <dbReference type="ChEBI" id="CHEBI:15378"/>
        <dbReference type="ChEBI" id="CHEBI:30616"/>
        <dbReference type="ChEBI" id="CHEBI:43474"/>
        <dbReference type="ChEBI" id="CHEBI:456216"/>
        <dbReference type="EC" id="3.6.4.13"/>
    </reaction>
    <physiologicalReaction direction="left-to-right" evidence="2">
        <dbReference type="Rhea" id="RHEA:13066"/>
    </physiologicalReaction>
</comment>
<comment type="subunit">
    <text evidence="2">Homooligomer (By similarity). Interacts with RUVBL1 (By similarity). Interacts with RUVBL2 (By similarity). Interacts with GTF3C1 (By similarity). Interacts with ABT1 (By similarity). Interacts with ribosomes (By similarity).</text>
</comment>
<comment type="subcellular location">
    <subcellularLocation>
        <location evidence="2">Nucleus</location>
    </subcellularLocation>
    <subcellularLocation>
        <location evidence="2">Cytoplasm</location>
    </subcellularLocation>
    <subcellularLocation>
        <location evidence="3">Cell projection</location>
        <location evidence="3">Axon</location>
    </subcellularLocation>
</comment>
<comment type="tissue specificity">
    <text evidence="10">Expressed in liver, skin, muscle, heart, brain, spleen and kidney.</text>
</comment>
<comment type="domain">
    <text evidence="2">The R3H domain recognizes phosphorylated 5'-ends of single-stranded nucleic acids which promotes binding of nucleic acids and stimulates ATPase activity.</text>
</comment>
<comment type="similarity">
    <text evidence="11">Belongs to the DNA2/NAM7 helicase family.</text>
</comment>
<keyword id="KW-0007">Acetylation</keyword>
<keyword id="KW-0010">Activator</keyword>
<keyword id="KW-0067">ATP-binding</keyword>
<keyword id="KW-0966">Cell projection</keyword>
<keyword id="KW-0175">Coiled coil</keyword>
<keyword id="KW-0963">Cytoplasm</keyword>
<keyword id="KW-0238">DNA-binding</keyword>
<keyword id="KW-0347">Helicase</keyword>
<keyword id="KW-0378">Hydrolase</keyword>
<keyword id="KW-0479">Metal-binding</keyword>
<keyword id="KW-0547">Nucleotide-binding</keyword>
<keyword id="KW-0539">Nucleus</keyword>
<keyword id="KW-0597">Phosphoprotein</keyword>
<keyword id="KW-1185">Reference proteome</keyword>
<keyword id="KW-0687">Ribonucleoprotein</keyword>
<keyword id="KW-0694">RNA-binding</keyword>
<keyword id="KW-0804">Transcription</keyword>
<keyword id="KW-0805">Transcription regulation</keyword>
<keyword id="KW-0820">tRNA-binding</keyword>
<keyword id="KW-0862">Zinc</keyword>
<keyword id="KW-0863">Zinc-finger</keyword>
<evidence type="ECO:0000250" key="1"/>
<evidence type="ECO:0000250" key="2">
    <source>
        <dbReference type="UniProtKB" id="P38935"/>
    </source>
</evidence>
<evidence type="ECO:0000250" key="3">
    <source>
        <dbReference type="UniProtKB" id="P40694"/>
    </source>
</evidence>
<evidence type="ECO:0000250" key="4">
    <source>
        <dbReference type="UniProtKB" id="Q92900"/>
    </source>
</evidence>
<evidence type="ECO:0000255" key="5"/>
<evidence type="ECO:0000255" key="6">
    <source>
        <dbReference type="PROSITE-ProRule" id="PRU00382"/>
    </source>
</evidence>
<evidence type="ECO:0000255" key="7">
    <source>
        <dbReference type="PROSITE-ProRule" id="PRU00449"/>
    </source>
</evidence>
<evidence type="ECO:0000255" key="8">
    <source>
        <dbReference type="PROSITE-ProRule" id="PRU00499"/>
    </source>
</evidence>
<evidence type="ECO:0000256" key="9">
    <source>
        <dbReference type="SAM" id="MobiDB-lite"/>
    </source>
</evidence>
<evidence type="ECO:0000269" key="10">
    <source>
    </source>
</evidence>
<evidence type="ECO:0000305" key="11"/>
<gene>
    <name type="primary">Ighmbp2</name>
    <name type="synonym">Smbp2</name>
</gene>
<feature type="initiator methionine" description="Removed" evidence="2">
    <location>
        <position position="1"/>
    </location>
</feature>
<feature type="chain" id="PRO_0000372431" description="DNA-binding protein SMUBP-2">
    <location>
        <begin position="2"/>
        <end position="988"/>
    </location>
</feature>
<feature type="domain" description="R3H" evidence="6">
    <location>
        <begin position="721"/>
        <end position="784"/>
    </location>
</feature>
<feature type="zinc finger region" description="AN1-type" evidence="7">
    <location>
        <begin position="884"/>
        <end position="933"/>
    </location>
</feature>
<feature type="region of interest" description="SS DNA-binding" evidence="1">
    <location>
        <begin position="637"/>
        <end position="783"/>
    </location>
</feature>
<feature type="region of interest" description="Disordered" evidence="9">
    <location>
        <begin position="651"/>
        <end position="722"/>
    </location>
</feature>
<feature type="region of interest" description="Disordered" evidence="9">
    <location>
        <begin position="765"/>
        <end position="820"/>
    </location>
</feature>
<feature type="region of interest" description="Disordered" evidence="9">
    <location>
        <begin position="835"/>
        <end position="872"/>
    </location>
</feature>
<feature type="region of interest" description="Disordered" evidence="9">
    <location>
        <begin position="943"/>
        <end position="988"/>
    </location>
</feature>
<feature type="coiled-coil region" evidence="5">
    <location>
        <begin position="957"/>
        <end position="986"/>
    </location>
</feature>
<feature type="short sequence motif" description="Nuclear localization signal" evidence="5">
    <location>
        <begin position="857"/>
        <end position="861"/>
    </location>
</feature>
<feature type="compositionally biased region" description="Polar residues" evidence="9">
    <location>
        <begin position="702"/>
        <end position="718"/>
    </location>
</feature>
<feature type="compositionally biased region" description="Basic and acidic residues" evidence="9">
    <location>
        <begin position="765"/>
        <end position="775"/>
    </location>
</feature>
<feature type="compositionally biased region" description="Low complexity" evidence="9">
    <location>
        <begin position="802"/>
        <end position="817"/>
    </location>
</feature>
<feature type="compositionally biased region" description="Polar residues" evidence="9">
    <location>
        <begin position="835"/>
        <end position="844"/>
    </location>
</feature>
<feature type="compositionally biased region" description="Basic and acidic residues" evidence="9">
    <location>
        <begin position="949"/>
        <end position="971"/>
    </location>
</feature>
<feature type="binding site" evidence="8">
    <location>
        <begin position="213"/>
        <end position="220"/>
    </location>
    <ligand>
        <name>ATP</name>
        <dbReference type="ChEBI" id="CHEBI:30616"/>
    </ligand>
</feature>
<feature type="binding site" evidence="4">
    <location>
        <position position="402"/>
    </location>
    <ligand>
        <name>ATP</name>
        <dbReference type="ChEBI" id="CHEBI:30616"/>
    </ligand>
</feature>
<feature type="binding site" evidence="4">
    <location>
        <position position="441"/>
    </location>
    <ligand>
        <name>ATP</name>
        <dbReference type="ChEBI" id="CHEBI:30616"/>
    </ligand>
</feature>
<feature type="binding site" evidence="4">
    <location>
        <position position="570"/>
    </location>
    <ligand>
        <name>ATP</name>
        <dbReference type="ChEBI" id="CHEBI:30616"/>
    </ligand>
</feature>
<feature type="binding site" evidence="7">
    <location>
        <position position="890"/>
    </location>
    <ligand>
        <name>Zn(2+)</name>
        <dbReference type="ChEBI" id="CHEBI:29105"/>
        <label>1</label>
    </ligand>
</feature>
<feature type="binding site" evidence="7">
    <location>
        <position position="895"/>
    </location>
    <ligand>
        <name>Zn(2+)</name>
        <dbReference type="ChEBI" id="CHEBI:29105"/>
        <label>1</label>
    </ligand>
</feature>
<feature type="binding site" evidence="7">
    <location>
        <position position="906"/>
    </location>
    <ligand>
        <name>Zn(2+)</name>
        <dbReference type="ChEBI" id="CHEBI:29105"/>
        <label>2</label>
    </ligand>
</feature>
<feature type="binding site" evidence="7">
    <location>
        <position position="909"/>
    </location>
    <ligand>
        <name>Zn(2+)</name>
        <dbReference type="ChEBI" id="CHEBI:29105"/>
        <label>2</label>
    </ligand>
</feature>
<feature type="binding site" evidence="7">
    <location>
        <position position="914"/>
    </location>
    <ligand>
        <name>Zn(2+)</name>
        <dbReference type="ChEBI" id="CHEBI:29105"/>
        <label>1</label>
    </ligand>
</feature>
<feature type="binding site" evidence="7">
    <location>
        <position position="917"/>
    </location>
    <ligand>
        <name>Zn(2+)</name>
        <dbReference type="ChEBI" id="CHEBI:29105"/>
        <label>1</label>
    </ligand>
</feature>
<feature type="binding site" evidence="7">
    <location>
        <position position="923"/>
    </location>
    <ligand>
        <name>Zn(2+)</name>
        <dbReference type="ChEBI" id="CHEBI:29105"/>
        <label>2</label>
    </ligand>
</feature>
<feature type="binding site" evidence="7">
    <location>
        <position position="925"/>
    </location>
    <ligand>
        <name>Zn(2+)</name>
        <dbReference type="ChEBI" id="CHEBI:29105"/>
        <label>2</label>
    </ligand>
</feature>
<feature type="modified residue" description="N-acetylalanine" evidence="2">
    <location>
        <position position="2"/>
    </location>
</feature>
<feature type="modified residue" description="Phosphoserine" evidence="3">
    <location>
        <position position="797"/>
    </location>
</feature>
<feature type="modified residue" description="Phosphoserine" evidence="3">
    <location>
        <position position="800"/>
    </location>
</feature>
<name>SMBP2_RAT</name>
<reference key="1">
    <citation type="journal article" date="2000" name="Eur. J. Biochem.">
        <title>The rat ortholog of the presumptive flounder antifreeze enhancer-binding protein is a helicase domain-containing protein.</title>
        <authorList>
            <person name="Miao M."/>
            <person name="Chan S.-L."/>
            <person name="Fletcher G.L."/>
            <person name="Hew C.L."/>
        </authorList>
    </citation>
    <scope>NUCLEOTIDE SEQUENCE [MRNA]</scope>
    <scope>FUNCTION</scope>
    <scope>DNA-BINDING</scope>
    <scope>TISSUE SPECIFICITY</scope>
    <source>
        <strain>Sprague-Dawley</strain>
    </source>
</reference>